<comment type="function">
    <text evidence="1">Displays methyltransferase, positive regulation of the poly(A) polymerase and transcription elongation activities. Involved in the modification of both mRNA ends and in intermediate and late gene positive transcription elongation. At the mRNAs 5' end, methylates the ribose 2' OH group of the first transcribed nucleotide, thereby producing a 2'-O-methylpurine cap. At the 3' end, functions as a processivity factor which stimulates the activity of the viral poly(A) polymerase OPG063 that creates mRNA's poly(A) tail. In the presence of OPG102, OPG063 does not dissociate from the RNA allowing tail elongation to around 250 adenylates.</text>
</comment>
<comment type="catalytic activity">
    <reaction evidence="1">
        <text>a 5'-end (N(7)-methyl 5'-triphosphoguanosine)-ribonucleoside in mRNA + S-adenosyl-L-methionine = a 5'-end (N(7)-methyl 5'-triphosphoguanosine)-(2'-O-methyl-ribonucleoside) in mRNA + S-adenosyl-L-homocysteine + H(+)</text>
        <dbReference type="Rhea" id="RHEA:67020"/>
        <dbReference type="Rhea" id="RHEA-COMP:17167"/>
        <dbReference type="Rhea" id="RHEA-COMP:17168"/>
        <dbReference type="ChEBI" id="CHEBI:15378"/>
        <dbReference type="ChEBI" id="CHEBI:57856"/>
        <dbReference type="ChEBI" id="CHEBI:59789"/>
        <dbReference type="ChEBI" id="CHEBI:156461"/>
        <dbReference type="ChEBI" id="CHEBI:167609"/>
        <dbReference type="EC" id="2.1.1.57"/>
    </reaction>
</comment>
<comment type="subunit">
    <text evidence="1">Interacts with poly(A) polymerase catalytic subunit OPG063. Interacts with OPG109 and OPG123; these interactions might help linking transcription to capping and polyadenylation.</text>
</comment>
<comment type="subcellular location">
    <subcellularLocation>
        <location evidence="1">Virion</location>
    </subcellularLocation>
    <text evidence="1">Localizes to the virion core.</text>
</comment>
<comment type="similarity">
    <text evidence="2">Belongs to the class I-like SAM-binding methyltransferase superfamily. Poxvirus/kinetoplastid 2'-O-MTase family.</text>
</comment>
<accession>P23334</accession>
<reference key="1">
    <citation type="journal article" date="1991" name="Virology">
        <title>Identification and nucleotide sequence of the thymidine kinase gene of swinepox virus.</title>
        <authorList>
            <person name="Schnitzlein W.M."/>
            <person name="Tripathy D.N."/>
        </authorList>
    </citation>
    <scope>NUCLEOTIDE SEQUENCE [GENOMIC DNA]</scope>
</reference>
<dbReference type="EC" id="2.1.1.57"/>
<dbReference type="EMBL" id="M59931">
    <property type="protein sequence ID" value="AAA47893.1"/>
    <property type="molecule type" value="Genomic_DNA"/>
</dbReference>
<dbReference type="PIR" id="D37949">
    <property type="entry name" value="D37949"/>
</dbReference>
<dbReference type="SMR" id="P23334"/>
<dbReference type="GO" id="GO:0044423">
    <property type="term" value="C:virion component"/>
    <property type="evidence" value="ECO:0007669"/>
    <property type="project" value="UniProtKB-KW"/>
</dbReference>
<dbReference type="GO" id="GO:0004483">
    <property type="term" value="F:mRNA (nucleoside-2'-O-)-methyltransferase activity"/>
    <property type="evidence" value="ECO:0007669"/>
    <property type="project" value="UniProtKB-EC"/>
</dbReference>
<dbReference type="GO" id="GO:0006370">
    <property type="term" value="P:7-methylguanosine mRNA capping"/>
    <property type="evidence" value="ECO:0007669"/>
    <property type="project" value="UniProtKB-KW"/>
</dbReference>
<dbReference type="GO" id="GO:0032259">
    <property type="term" value="P:methylation"/>
    <property type="evidence" value="ECO:0007669"/>
    <property type="project" value="UniProtKB-KW"/>
</dbReference>
<dbReference type="Gene3D" id="3.40.50.150">
    <property type="entry name" value="Vaccinia Virus protein VP39"/>
    <property type="match status" value="1"/>
</dbReference>
<dbReference type="InterPro" id="IPR000176">
    <property type="entry name" value="mRNA_MeTrfase-like"/>
</dbReference>
<dbReference type="InterPro" id="IPR025804">
    <property type="entry name" value="Pox/kineto_cap_MeTfrase"/>
</dbReference>
<dbReference type="InterPro" id="IPR029063">
    <property type="entry name" value="SAM-dependent_MTases_sf"/>
</dbReference>
<dbReference type="Pfam" id="PF01358">
    <property type="entry name" value="PARP_regulatory"/>
    <property type="match status" value="1"/>
</dbReference>
<dbReference type="SUPFAM" id="SSF53335">
    <property type="entry name" value="S-adenosyl-L-methionine-dependent methyltransferases"/>
    <property type="match status" value="1"/>
</dbReference>
<dbReference type="PROSITE" id="PS51612">
    <property type="entry name" value="SAM_MT_2O_PK"/>
    <property type="match status" value="1"/>
</dbReference>
<proteinExistence type="inferred from homology"/>
<gene>
    <name type="primary">OPG102</name>
    <name type="synonym">PAPS</name>
    <name type="ORF">SWF9</name>
</gene>
<protein>
    <recommendedName>
        <fullName>Cap-specific mRNA (nucleoside-2'-O-)-methyltransferase</fullName>
        <ecNumber>2.1.1.57</ecNumber>
    </recommendedName>
    <alternativeName>
        <fullName>Poly(A) polymerase regulatory subunit</fullName>
    </alternativeName>
    <alternativeName>
        <fullName>Poly(A) polymerase small subunit</fullName>
        <shortName>PAP-S</shortName>
    </alternativeName>
    <alternativeName>
        <fullName>VP39</fullName>
    </alternativeName>
</protein>
<sequence length="69" mass="8069">MEPLSIDKPFMYFDEINNELEYDPDSANEKHKKFPYQGQLKLLLCELFFLSKLQRHGILDGSTIVYIGS</sequence>
<evidence type="ECO:0000250" key="1">
    <source>
        <dbReference type="UniProtKB" id="P07617"/>
    </source>
</evidence>
<evidence type="ECO:0000255" key="2">
    <source>
        <dbReference type="PROSITE-ProRule" id="PRU00944"/>
    </source>
</evidence>
<keyword id="KW-0251">Elongation factor</keyword>
<keyword id="KW-0489">Methyltransferase</keyword>
<keyword id="KW-0506">mRNA capping</keyword>
<keyword id="KW-0507">mRNA processing</keyword>
<keyword id="KW-0648">Protein biosynthesis</keyword>
<keyword id="KW-0949">S-adenosyl-L-methionine</keyword>
<keyword id="KW-0804">Transcription</keyword>
<keyword id="KW-0808">Transferase</keyword>
<keyword id="KW-0946">Virion</keyword>
<organismHost>
    <name type="scientific">Sus scrofa</name>
    <name type="common">Pig</name>
    <dbReference type="NCBI Taxonomy" id="9823"/>
</organismHost>
<organism>
    <name type="scientific">Swinepox virus (strain Kasza)</name>
    <name type="common">SWPV</name>
    <dbReference type="NCBI Taxonomy" id="10277"/>
    <lineage>
        <taxon>Viruses</taxon>
        <taxon>Varidnaviria</taxon>
        <taxon>Bamfordvirae</taxon>
        <taxon>Nucleocytoviricota</taxon>
        <taxon>Pokkesviricetes</taxon>
        <taxon>Chitovirales</taxon>
        <taxon>Poxviridae</taxon>
        <taxon>Chordopoxvirinae</taxon>
        <taxon>Suipoxvirus</taxon>
        <taxon>Swinepox virus</taxon>
    </lineage>
</organism>
<name>MCE_SWPVK</name>
<feature type="chain" id="PRO_0000099118" description="Cap-specific mRNA (nucleoside-2'-O-)-methyltransferase">
    <location>
        <begin position="1"/>
        <end position="69" status="greater than"/>
    </location>
</feature>
<feature type="binding site" evidence="2">
    <location>
        <position position="22"/>
    </location>
    <ligand>
        <name>mRNA</name>
        <dbReference type="ChEBI" id="CHEBI:33699"/>
    </ligand>
    <ligandPart>
        <name>mRNA cap</name>
    </ligandPart>
</feature>
<feature type="binding site" evidence="2">
    <location>
        <position position="39"/>
    </location>
    <ligand>
        <name>S-adenosyl-L-methionine</name>
        <dbReference type="ChEBI" id="CHEBI:59789"/>
    </ligand>
</feature>
<feature type="binding site" evidence="2">
    <location>
        <position position="66"/>
    </location>
    <ligand>
        <name>S-adenosyl-L-methionine</name>
        <dbReference type="ChEBI" id="CHEBI:59789"/>
    </ligand>
</feature>
<feature type="binding site" evidence="2">
    <location>
        <position position="68"/>
    </location>
    <ligand>
        <name>S-adenosyl-L-methionine</name>
        <dbReference type="ChEBI" id="CHEBI:59789"/>
    </ligand>
</feature>
<feature type="non-terminal residue">
    <location>
        <position position="69"/>
    </location>
</feature>